<name>TXC20_CUPSA</name>
<sequence length="86" mass="9918">WNACTKQSDCEEDECCLDNLFFKRPYCEKRYGAEQRCSAAAVYKEDKDLYYFTCPCVPMYECLGKGSLDENGNTVMKNPKCIMPTL</sequence>
<evidence type="ECO:0000269" key="1">
    <source>
    </source>
</evidence>
<evidence type="ECO:0000303" key="2">
    <source>
    </source>
</evidence>
<evidence type="ECO:0000305" key="3">
    <source>
    </source>
</evidence>
<feature type="peptide" id="PRO_0000421192" description="Toxin CSTX-20" evidence="1">
    <location>
        <begin position="1"/>
        <end position="86"/>
    </location>
</feature>
<accession>B3EWT5</accession>
<dbReference type="GO" id="GO:0005576">
    <property type="term" value="C:extracellular region"/>
    <property type="evidence" value="ECO:0007669"/>
    <property type="project" value="UniProtKB-SubCell"/>
</dbReference>
<dbReference type="GO" id="GO:0090729">
    <property type="term" value="F:toxin activity"/>
    <property type="evidence" value="ECO:0007669"/>
    <property type="project" value="UniProtKB-KW"/>
</dbReference>
<dbReference type="Gene3D" id="2.10.80.10">
    <property type="entry name" value="Lipase, subunit A"/>
    <property type="match status" value="1"/>
</dbReference>
<proteinExistence type="evidence at protein level"/>
<organism>
    <name type="scientific">Cupiennius salei</name>
    <name type="common">American wandering spider</name>
    <dbReference type="NCBI Taxonomy" id="6928"/>
    <lineage>
        <taxon>Eukaryota</taxon>
        <taxon>Metazoa</taxon>
        <taxon>Ecdysozoa</taxon>
        <taxon>Arthropoda</taxon>
        <taxon>Chelicerata</taxon>
        <taxon>Arachnida</taxon>
        <taxon>Araneae</taxon>
        <taxon>Araneomorphae</taxon>
        <taxon>Entelegynae</taxon>
        <taxon>Lycosoidea</taxon>
        <taxon>Ctenidae</taxon>
        <taxon>Cupiennius</taxon>
    </lineage>
</organism>
<keyword id="KW-0903">Direct protein sequencing</keyword>
<keyword id="KW-0964">Secreted</keyword>
<keyword id="KW-0800">Toxin</keyword>
<reference key="1">
    <citation type="journal article" date="2012" name="FEBS J.">
        <title>Multicomponent venom of the spider Cupiennius salei: a bioanalytical investigation applying different strategies.</title>
        <authorList>
            <person name="Trachsel C."/>
            <person name="Siegemund D."/>
            <person name="Kampfer U."/>
            <person name="Kopp L.S."/>
            <person name="Buhr C."/>
            <person name="Grossmann J."/>
            <person name="Luthi C."/>
            <person name="Cunningham M."/>
            <person name="Nentwig W."/>
            <person name="Kuhn-Nentwig L."/>
            <person name="Schurch S."/>
            <person name="Schaller J."/>
        </authorList>
    </citation>
    <scope>PROTEIN SEQUENCE</scope>
    <scope>MASS SPECTROMETRY</scope>
    <scope>DISULFIDE BONDS</scope>
    <source>
        <tissue>Venom</tissue>
    </source>
</reference>
<comment type="subcellular location">
    <subcellularLocation>
        <location evidence="1">Secreted</location>
    </subcellularLocation>
</comment>
<comment type="tissue specificity">
    <text evidence="3">Expressed by the venom gland.</text>
</comment>
<comment type="mass spectrometry" mass="9901.308" method="Electrospray" evidence="1"/>
<comment type="similarity">
    <text>Belongs to the neurotoxin 20 family.</text>
</comment>
<protein>
    <recommendedName>
        <fullName evidence="2">Toxin CSTX-20</fullName>
    </recommendedName>
</protein>